<name>Y1880_BURMS</name>
<reference key="1">
    <citation type="journal article" date="2010" name="Genome Biol. Evol.">
        <title>Continuing evolution of Burkholderia mallei through genome reduction and large-scale rearrangements.</title>
        <authorList>
            <person name="Losada L."/>
            <person name="Ronning C.M."/>
            <person name="DeShazer D."/>
            <person name="Woods D."/>
            <person name="Fedorova N."/>
            <person name="Kim H.S."/>
            <person name="Shabalina S.A."/>
            <person name="Pearson T.R."/>
            <person name="Brinkac L."/>
            <person name="Tan P."/>
            <person name="Nandi T."/>
            <person name="Crabtree J."/>
            <person name="Badger J."/>
            <person name="Beckstrom-Sternberg S."/>
            <person name="Saqib M."/>
            <person name="Schutzer S.E."/>
            <person name="Keim P."/>
            <person name="Nierman W.C."/>
        </authorList>
    </citation>
    <scope>NUCLEOTIDE SEQUENCE [LARGE SCALE GENOMIC DNA]</scope>
    <source>
        <strain>SAVP1</strain>
    </source>
</reference>
<proteinExistence type="inferred from homology"/>
<evidence type="ECO:0000255" key="1">
    <source>
        <dbReference type="HAMAP-Rule" id="MF_00636"/>
    </source>
</evidence>
<keyword id="KW-0067">ATP-binding</keyword>
<keyword id="KW-0342">GTP-binding</keyword>
<keyword id="KW-0547">Nucleotide-binding</keyword>
<protein>
    <recommendedName>
        <fullName evidence="1">Nucleotide-binding protein BMASAVP1_A0080</fullName>
    </recommendedName>
</protein>
<sequence>MRIVLITGISGSGKSVALNALEDAGYYCVDNLPPHVLPELARYLAHEGQNRLAVAIDARSSASLDEMPGLIRALSHEHDVRVLFLNASTQALIQRFSETRRRHPLSGSPSHDADVGLLVSLEEAIERERELVAPLAEFGHQIDTSNLRANVLRTWVKRFIEQKNDDLVLMFESFGFKRGVPLDADFMFDVRALPNPYYDHELRPLTGLDQPVVAFLDALPVVHQMLDDIETFLVKWLPHFREDNRSYLTVAIGCTGGQHRSVFLAETLAARLSRQASVIVRHRDAPVAVDASSRLVT</sequence>
<organism>
    <name type="scientific">Burkholderia mallei (strain SAVP1)</name>
    <dbReference type="NCBI Taxonomy" id="320388"/>
    <lineage>
        <taxon>Bacteria</taxon>
        <taxon>Pseudomonadati</taxon>
        <taxon>Pseudomonadota</taxon>
        <taxon>Betaproteobacteria</taxon>
        <taxon>Burkholderiales</taxon>
        <taxon>Burkholderiaceae</taxon>
        <taxon>Burkholderia</taxon>
        <taxon>pseudomallei group</taxon>
    </lineage>
</organism>
<dbReference type="EMBL" id="CP000526">
    <property type="protein sequence ID" value="ABM52346.1"/>
    <property type="molecule type" value="Genomic_DNA"/>
</dbReference>
<dbReference type="SMR" id="A1UZM9"/>
<dbReference type="KEGG" id="bmv:BMASAVP1_A0080"/>
<dbReference type="HOGENOM" id="CLU_059558_1_1_4"/>
<dbReference type="GO" id="GO:0005524">
    <property type="term" value="F:ATP binding"/>
    <property type="evidence" value="ECO:0007669"/>
    <property type="project" value="UniProtKB-UniRule"/>
</dbReference>
<dbReference type="GO" id="GO:0005525">
    <property type="term" value="F:GTP binding"/>
    <property type="evidence" value="ECO:0007669"/>
    <property type="project" value="UniProtKB-UniRule"/>
</dbReference>
<dbReference type="Gene3D" id="3.40.50.300">
    <property type="entry name" value="P-loop containing nucleotide triphosphate hydrolases"/>
    <property type="match status" value="1"/>
</dbReference>
<dbReference type="HAMAP" id="MF_00636">
    <property type="entry name" value="RapZ_like"/>
    <property type="match status" value="1"/>
</dbReference>
<dbReference type="InterPro" id="IPR027417">
    <property type="entry name" value="P-loop_NTPase"/>
</dbReference>
<dbReference type="InterPro" id="IPR005337">
    <property type="entry name" value="RapZ-like"/>
</dbReference>
<dbReference type="InterPro" id="IPR053930">
    <property type="entry name" value="RapZ-like_N"/>
</dbReference>
<dbReference type="InterPro" id="IPR053931">
    <property type="entry name" value="RapZ_C"/>
</dbReference>
<dbReference type="NCBIfam" id="NF003828">
    <property type="entry name" value="PRK05416.1"/>
    <property type="match status" value="1"/>
</dbReference>
<dbReference type="PANTHER" id="PTHR30448">
    <property type="entry name" value="RNASE ADAPTER PROTEIN RAPZ"/>
    <property type="match status" value="1"/>
</dbReference>
<dbReference type="PANTHER" id="PTHR30448:SF0">
    <property type="entry name" value="RNASE ADAPTER PROTEIN RAPZ"/>
    <property type="match status" value="1"/>
</dbReference>
<dbReference type="Pfam" id="PF22740">
    <property type="entry name" value="PapZ_C"/>
    <property type="match status" value="1"/>
</dbReference>
<dbReference type="Pfam" id="PF03668">
    <property type="entry name" value="RapZ-like_N"/>
    <property type="match status" value="1"/>
</dbReference>
<dbReference type="PIRSF" id="PIRSF005052">
    <property type="entry name" value="P-loopkin"/>
    <property type="match status" value="1"/>
</dbReference>
<dbReference type="SUPFAM" id="SSF52540">
    <property type="entry name" value="P-loop containing nucleoside triphosphate hydrolases"/>
    <property type="match status" value="1"/>
</dbReference>
<comment type="function">
    <text evidence="1">Displays ATPase and GTPase activities.</text>
</comment>
<comment type="similarity">
    <text evidence="1">Belongs to the RapZ-like family.</text>
</comment>
<feature type="chain" id="PRO_1000056811" description="Nucleotide-binding protein BMASAVP1_A0080">
    <location>
        <begin position="1"/>
        <end position="297"/>
    </location>
</feature>
<feature type="binding site" evidence="1">
    <location>
        <begin position="8"/>
        <end position="15"/>
    </location>
    <ligand>
        <name>ATP</name>
        <dbReference type="ChEBI" id="CHEBI:30616"/>
    </ligand>
</feature>
<feature type="binding site" evidence="1">
    <location>
        <begin position="57"/>
        <end position="60"/>
    </location>
    <ligand>
        <name>GTP</name>
        <dbReference type="ChEBI" id="CHEBI:37565"/>
    </ligand>
</feature>
<accession>A1UZM9</accession>
<gene>
    <name type="ordered locus">BMASAVP1_A0080</name>
</gene>